<proteinExistence type="inferred from homology"/>
<organism>
    <name type="scientific">Shouchella clausii (strain KSM-K16)</name>
    <name type="common">Alkalihalobacillus clausii</name>
    <dbReference type="NCBI Taxonomy" id="66692"/>
    <lineage>
        <taxon>Bacteria</taxon>
        <taxon>Bacillati</taxon>
        <taxon>Bacillota</taxon>
        <taxon>Bacilli</taxon>
        <taxon>Bacillales</taxon>
        <taxon>Bacillaceae</taxon>
        <taxon>Shouchella</taxon>
    </lineage>
</organism>
<protein>
    <recommendedName>
        <fullName evidence="1">Sulfur carrier protein FdhD</fullName>
    </recommendedName>
</protein>
<comment type="function">
    <text evidence="1">Required for formate dehydrogenase (FDH) activity. Acts as a sulfur carrier protein that transfers sulfur from IscS to the molybdenum cofactor prior to its insertion into FDH.</text>
</comment>
<comment type="subcellular location">
    <subcellularLocation>
        <location evidence="1">Cytoplasm</location>
    </subcellularLocation>
</comment>
<comment type="similarity">
    <text evidence="1">Belongs to the FdhD family.</text>
</comment>
<dbReference type="EMBL" id="AP006627">
    <property type="protein sequence ID" value="BAD63441.1"/>
    <property type="molecule type" value="Genomic_DNA"/>
</dbReference>
<dbReference type="RefSeq" id="WP_011245757.1">
    <property type="nucleotide sequence ID" value="NC_006582.1"/>
</dbReference>
<dbReference type="SMR" id="Q5WJL4"/>
<dbReference type="STRING" id="66692.ABC0902"/>
<dbReference type="KEGG" id="bcl:ABC0902"/>
<dbReference type="eggNOG" id="COG1526">
    <property type="taxonomic scope" value="Bacteria"/>
</dbReference>
<dbReference type="HOGENOM" id="CLU_056887_4_1_9"/>
<dbReference type="OrthoDB" id="9782042at2"/>
<dbReference type="Proteomes" id="UP000001168">
    <property type="component" value="Chromosome"/>
</dbReference>
<dbReference type="GO" id="GO:0005737">
    <property type="term" value="C:cytoplasm"/>
    <property type="evidence" value="ECO:0007669"/>
    <property type="project" value="UniProtKB-SubCell"/>
</dbReference>
<dbReference type="GO" id="GO:0097163">
    <property type="term" value="F:sulfur carrier activity"/>
    <property type="evidence" value="ECO:0007669"/>
    <property type="project" value="UniProtKB-UniRule"/>
</dbReference>
<dbReference type="GO" id="GO:0016783">
    <property type="term" value="F:sulfurtransferase activity"/>
    <property type="evidence" value="ECO:0007669"/>
    <property type="project" value="InterPro"/>
</dbReference>
<dbReference type="GO" id="GO:0006777">
    <property type="term" value="P:Mo-molybdopterin cofactor biosynthetic process"/>
    <property type="evidence" value="ECO:0007669"/>
    <property type="project" value="UniProtKB-UniRule"/>
</dbReference>
<dbReference type="Gene3D" id="3.10.20.10">
    <property type="match status" value="1"/>
</dbReference>
<dbReference type="Gene3D" id="3.40.140.10">
    <property type="entry name" value="Cytidine Deaminase, domain 2"/>
    <property type="match status" value="1"/>
</dbReference>
<dbReference type="HAMAP" id="MF_00187">
    <property type="entry name" value="FdhD"/>
    <property type="match status" value="1"/>
</dbReference>
<dbReference type="InterPro" id="IPR016193">
    <property type="entry name" value="Cytidine_deaminase-like"/>
</dbReference>
<dbReference type="InterPro" id="IPR003786">
    <property type="entry name" value="FdhD"/>
</dbReference>
<dbReference type="NCBIfam" id="TIGR00129">
    <property type="entry name" value="fdhD_narQ"/>
    <property type="match status" value="1"/>
</dbReference>
<dbReference type="PANTHER" id="PTHR30592">
    <property type="entry name" value="FORMATE DEHYDROGENASE"/>
    <property type="match status" value="1"/>
</dbReference>
<dbReference type="PANTHER" id="PTHR30592:SF1">
    <property type="entry name" value="SULFUR CARRIER PROTEIN FDHD"/>
    <property type="match status" value="1"/>
</dbReference>
<dbReference type="Pfam" id="PF02634">
    <property type="entry name" value="FdhD-NarQ"/>
    <property type="match status" value="1"/>
</dbReference>
<dbReference type="PIRSF" id="PIRSF015626">
    <property type="entry name" value="FdhD"/>
    <property type="match status" value="1"/>
</dbReference>
<dbReference type="SUPFAM" id="SSF53927">
    <property type="entry name" value="Cytidine deaminase-like"/>
    <property type="match status" value="1"/>
</dbReference>
<feature type="chain" id="PRO_0000152889" description="Sulfur carrier protein FdhD">
    <location>
        <begin position="1"/>
        <end position="267"/>
    </location>
</feature>
<feature type="active site" description="Cysteine persulfide intermediate" evidence="1">
    <location>
        <position position="108"/>
    </location>
</feature>
<keyword id="KW-0963">Cytoplasm</keyword>
<keyword id="KW-0501">Molybdenum cofactor biosynthesis</keyword>
<keyword id="KW-1185">Reference proteome</keyword>
<accession>Q5WJL4</accession>
<sequence>MEKNIQTSRQIWRFQAGEPVRIDDPIAREQPVTLKINGEEFATLVCTPTYLQEMAIGFLVSEGLIQAYEEVKTIWIDDRQGFIHIELVRPIDRLHQHLQTKRYMGSCCGMSRQGFVFASDAKTAKKVQTRDVKLNAGDCFRLMAELQENARTFQQTGGVHNAALATKDGLLLMREDVGRHNALDKLYGHCLQNGLSLHGKLVVFSGRLSAEIILKVAKIGCELVLSKSAPTDRALQIAEELDITTVGFIRNRSMNVYTVPERIELKS</sequence>
<gene>
    <name evidence="1" type="primary">fdhD</name>
    <name type="ordered locus">ABC0902</name>
</gene>
<evidence type="ECO:0000255" key="1">
    <source>
        <dbReference type="HAMAP-Rule" id="MF_00187"/>
    </source>
</evidence>
<reference key="1">
    <citation type="submission" date="2003-10" db="EMBL/GenBank/DDBJ databases">
        <title>The complete genome sequence of the alkaliphilic Bacillus clausii KSM-K16.</title>
        <authorList>
            <person name="Takaki Y."/>
            <person name="Kageyama Y."/>
            <person name="Shimamura S."/>
            <person name="Suzuki H."/>
            <person name="Nishi S."/>
            <person name="Hatada Y."/>
            <person name="Kawai S."/>
            <person name="Ito S."/>
            <person name="Horikoshi K."/>
        </authorList>
    </citation>
    <scope>NUCLEOTIDE SEQUENCE [LARGE SCALE GENOMIC DNA]</scope>
    <source>
        <strain>KSM-K16</strain>
    </source>
</reference>
<name>FDHD_SHOC1</name>